<proteinExistence type="inferred from homology"/>
<dbReference type="EMBL" id="CP001047">
    <property type="protein sequence ID" value="ACF07272.1"/>
    <property type="molecule type" value="Genomic_DNA"/>
</dbReference>
<dbReference type="RefSeq" id="WP_012498229.1">
    <property type="nucleotide sequence ID" value="NC_011025.1"/>
</dbReference>
<dbReference type="SMR" id="B3PMM0"/>
<dbReference type="STRING" id="243272.MARTH_orf409"/>
<dbReference type="KEGG" id="mat:MARTH_orf409"/>
<dbReference type="eggNOG" id="COG0203">
    <property type="taxonomic scope" value="Bacteria"/>
</dbReference>
<dbReference type="HOGENOM" id="CLU_074407_2_2_14"/>
<dbReference type="Proteomes" id="UP000008812">
    <property type="component" value="Chromosome"/>
</dbReference>
<dbReference type="GO" id="GO:0022625">
    <property type="term" value="C:cytosolic large ribosomal subunit"/>
    <property type="evidence" value="ECO:0007669"/>
    <property type="project" value="TreeGrafter"/>
</dbReference>
<dbReference type="GO" id="GO:0003735">
    <property type="term" value="F:structural constituent of ribosome"/>
    <property type="evidence" value="ECO:0007669"/>
    <property type="project" value="InterPro"/>
</dbReference>
<dbReference type="GO" id="GO:0006412">
    <property type="term" value="P:translation"/>
    <property type="evidence" value="ECO:0007669"/>
    <property type="project" value="UniProtKB-UniRule"/>
</dbReference>
<dbReference type="Gene3D" id="3.90.1030.10">
    <property type="entry name" value="Ribosomal protein L17"/>
    <property type="match status" value="1"/>
</dbReference>
<dbReference type="HAMAP" id="MF_01368">
    <property type="entry name" value="Ribosomal_bL17"/>
    <property type="match status" value="1"/>
</dbReference>
<dbReference type="InterPro" id="IPR000456">
    <property type="entry name" value="Ribosomal_bL17"/>
</dbReference>
<dbReference type="InterPro" id="IPR047859">
    <property type="entry name" value="Ribosomal_bL17_CS"/>
</dbReference>
<dbReference type="InterPro" id="IPR036373">
    <property type="entry name" value="Ribosomal_bL17_sf"/>
</dbReference>
<dbReference type="NCBIfam" id="TIGR00059">
    <property type="entry name" value="L17"/>
    <property type="match status" value="1"/>
</dbReference>
<dbReference type="PANTHER" id="PTHR14413:SF16">
    <property type="entry name" value="LARGE RIBOSOMAL SUBUNIT PROTEIN BL17M"/>
    <property type="match status" value="1"/>
</dbReference>
<dbReference type="PANTHER" id="PTHR14413">
    <property type="entry name" value="RIBOSOMAL PROTEIN L17"/>
    <property type="match status" value="1"/>
</dbReference>
<dbReference type="Pfam" id="PF01196">
    <property type="entry name" value="Ribosomal_L17"/>
    <property type="match status" value="1"/>
</dbReference>
<dbReference type="SUPFAM" id="SSF64263">
    <property type="entry name" value="Prokaryotic ribosomal protein L17"/>
    <property type="match status" value="1"/>
</dbReference>
<dbReference type="PROSITE" id="PS01167">
    <property type="entry name" value="RIBOSOMAL_L17"/>
    <property type="match status" value="1"/>
</dbReference>
<reference key="1">
    <citation type="journal article" date="2008" name="Infect. Immun.">
        <title>Genome of Mycoplasma arthritidis.</title>
        <authorList>
            <person name="Dybvig K."/>
            <person name="Zuhua C."/>
            <person name="Lao P."/>
            <person name="Jordan D.S."/>
            <person name="French C.T."/>
            <person name="Tu A.H."/>
            <person name="Loraine A.E."/>
        </authorList>
    </citation>
    <scope>NUCLEOTIDE SEQUENCE [LARGE SCALE GENOMIC DNA]</scope>
    <source>
        <strain>158L3-1</strain>
    </source>
</reference>
<comment type="subunit">
    <text evidence="1">Part of the 50S ribosomal subunit. Contacts protein L32.</text>
</comment>
<comment type="similarity">
    <text evidence="1">Belongs to the bacterial ribosomal protein bL17 family.</text>
</comment>
<name>RL17_META1</name>
<gene>
    <name evidence="1" type="primary">rplQ</name>
    <name type="ordered locus">MARTH_orf409</name>
</gene>
<feature type="chain" id="PRO_1000144451" description="Large ribosomal subunit protein bL17">
    <location>
        <begin position="1"/>
        <end position="121"/>
    </location>
</feature>
<organism>
    <name type="scientific">Metamycoplasma arthritidis (strain 158L3-1)</name>
    <name type="common">Mycoplasma arthritidis</name>
    <dbReference type="NCBI Taxonomy" id="243272"/>
    <lineage>
        <taxon>Bacteria</taxon>
        <taxon>Bacillati</taxon>
        <taxon>Mycoplasmatota</taxon>
        <taxon>Mycoplasmoidales</taxon>
        <taxon>Metamycoplasmataceae</taxon>
        <taxon>Metamycoplasma</taxon>
    </lineage>
</organism>
<keyword id="KW-1185">Reference proteome</keyword>
<keyword id="KW-0687">Ribonucleoprotein</keyword>
<keyword id="KW-0689">Ribosomal protein</keyword>
<protein>
    <recommendedName>
        <fullName evidence="1">Large ribosomal subunit protein bL17</fullName>
    </recommendedName>
    <alternativeName>
        <fullName evidence="2">50S ribosomal protein L17</fullName>
    </alternativeName>
</protein>
<sequence length="121" mass="13977">MANPKQVFRRNTEWWNHVERSLVTDLLIHGEIKTTLERAKRIKSKAEKMITLGKLNTLASRRQALKYLRLIPSKVANKDSVQYLFDTIAPKYKNRAGGYTRIIKIQNRAGDNAKMALIQLV</sequence>
<accession>B3PMM0</accession>
<evidence type="ECO:0000255" key="1">
    <source>
        <dbReference type="HAMAP-Rule" id="MF_01368"/>
    </source>
</evidence>
<evidence type="ECO:0000305" key="2"/>